<feature type="initiator methionine" description="Removed" evidence="1">
    <location>
        <position position="1"/>
    </location>
</feature>
<feature type="chain" id="PRO_0000173613" description="Transaldolase B">
    <location>
        <begin position="2"/>
        <end position="317"/>
    </location>
</feature>
<feature type="active site" description="Schiff-base intermediate with substrate" evidence="2">
    <location>
        <position position="132"/>
    </location>
</feature>
<dbReference type="EC" id="2.2.1.2" evidence="2"/>
<dbReference type="EMBL" id="AE006468">
    <property type="protein sequence ID" value="AAL18971.1"/>
    <property type="molecule type" value="Genomic_DNA"/>
</dbReference>
<dbReference type="RefSeq" id="NP_459012.1">
    <property type="nucleotide sequence ID" value="NC_003197.2"/>
</dbReference>
<dbReference type="SMR" id="P66955"/>
<dbReference type="STRING" id="99287.STM0007"/>
<dbReference type="PaxDb" id="99287-STM0007"/>
<dbReference type="GeneID" id="1251525"/>
<dbReference type="KEGG" id="stm:STM0007"/>
<dbReference type="PATRIC" id="fig|99287.12.peg.6"/>
<dbReference type="HOGENOM" id="CLU_047470_0_1_6"/>
<dbReference type="OMA" id="THAEFLW"/>
<dbReference type="PhylomeDB" id="P66955"/>
<dbReference type="BioCyc" id="SENT99287:STM0007-MONOMER"/>
<dbReference type="UniPathway" id="UPA00115">
    <property type="reaction ID" value="UER00414"/>
</dbReference>
<dbReference type="Proteomes" id="UP000001014">
    <property type="component" value="Chromosome"/>
</dbReference>
<dbReference type="GO" id="GO:0005829">
    <property type="term" value="C:cytosol"/>
    <property type="evidence" value="ECO:0000318"/>
    <property type="project" value="GO_Central"/>
</dbReference>
<dbReference type="GO" id="GO:0004801">
    <property type="term" value="F:transaldolase activity"/>
    <property type="evidence" value="ECO:0000250"/>
    <property type="project" value="UniProtKB"/>
</dbReference>
<dbReference type="GO" id="GO:0005975">
    <property type="term" value="P:carbohydrate metabolic process"/>
    <property type="evidence" value="ECO:0007669"/>
    <property type="project" value="InterPro"/>
</dbReference>
<dbReference type="GO" id="GO:0009052">
    <property type="term" value="P:pentose-phosphate shunt, non-oxidative branch"/>
    <property type="evidence" value="ECO:0000318"/>
    <property type="project" value="GO_Central"/>
</dbReference>
<dbReference type="CDD" id="cd00957">
    <property type="entry name" value="Transaldolase_TalAB"/>
    <property type="match status" value="1"/>
</dbReference>
<dbReference type="FunFam" id="3.20.20.70:FF:000002">
    <property type="entry name" value="Transaldolase"/>
    <property type="match status" value="1"/>
</dbReference>
<dbReference type="Gene3D" id="3.20.20.70">
    <property type="entry name" value="Aldolase class I"/>
    <property type="match status" value="1"/>
</dbReference>
<dbReference type="HAMAP" id="MF_00492">
    <property type="entry name" value="Transaldolase_1"/>
    <property type="match status" value="1"/>
</dbReference>
<dbReference type="InterPro" id="IPR013785">
    <property type="entry name" value="Aldolase_TIM"/>
</dbReference>
<dbReference type="InterPro" id="IPR001585">
    <property type="entry name" value="TAL/FSA"/>
</dbReference>
<dbReference type="InterPro" id="IPR004730">
    <property type="entry name" value="Transaldolase_1"/>
</dbReference>
<dbReference type="InterPro" id="IPR018225">
    <property type="entry name" value="Transaldolase_AS"/>
</dbReference>
<dbReference type="NCBIfam" id="NF009001">
    <property type="entry name" value="PRK12346.1"/>
    <property type="match status" value="1"/>
</dbReference>
<dbReference type="NCBIfam" id="TIGR00874">
    <property type="entry name" value="talAB"/>
    <property type="match status" value="1"/>
</dbReference>
<dbReference type="PANTHER" id="PTHR10683">
    <property type="entry name" value="TRANSALDOLASE"/>
    <property type="match status" value="1"/>
</dbReference>
<dbReference type="PANTHER" id="PTHR10683:SF18">
    <property type="entry name" value="TRANSALDOLASE"/>
    <property type="match status" value="1"/>
</dbReference>
<dbReference type="Pfam" id="PF00923">
    <property type="entry name" value="TAL_FSA"/>
    <property type="match status" value="1"/>
</dbReference>
<dbReference type="SUPFAM" id="SSF51569">
    <property type="entry name" value="Aldolase"/>
    <property type="match status" value="1"/>
</dbReference>
<dbReference type="PROSITE" id="PS01054">
    <property type="entry name" value="TRANSALDOLASE_1"/>
    <property type="match status" value="1"/>
</dbReference>
<dbReference type="PROSITE" id="PS00958">
    <property type="entry name" value="TRANSALDOLASE_2"/>
    <property type="match status" value="1"/>
</dbReference>
<gene>
    <name evidence="2" type="primary">talB</name>
    <name type="ordered locus">STM0007</name>
</gene>
<evidence type="ECO:0000250" key="1"/>
<evidence type="ECO:0000255" key="2">
    <source>
        <dbReference type="HAMAP-Rule" id="MF_00492"/>
    </source>
</evidence>
<proteinExistence type="inferred from homology"/>
<protein>
    <recommendedName>
        <fullName evidence="2">Transaldolase B</fullName>
        <ecNumber evidence="2">2.2.1.2</ecNumber>
    </recommendedName>
</protein>
<keyword id="KW-0963">Cytoplasm</keyword>
<keyword id="KW-0570">Pentose shunt</keyword>
<keyword id="KW-1185">Reference proteome</keyword>
<keyword id="KW-0704">Schiff base</keyword>
<keyword id="KW-0808">Transferase</keyword>
<sequence length="317" mass="35171">MTDKLTSLRQFTTVVADTGDIAAMKLYQPQDATTNPSLILNAAQIPEYRKLIDDAVAWAKQQSSDRAQQVVDATDKLAVNIGLEILKLVPGRISTEVDARLSYDTEASIAKAKRIIKLYNDAGISNDRILIKLASTWQGIRAAEQLEKEGINCNLTLLFSFAQARACAEAGVYLISPFVGRILDWYKANTDKKDYAPAEDPGVVSVTEIYEYYKQHGYETVVMGASFRNVGEILELAGCDRLTIAPALLKELAESEGAIERKLSFSGEVKARPERITEAEFLWQHHQDPMAVDKLADGIRKFAVDQEKLEKMIGDLL</sequence>
<accession>P66955</accession>
<accession>Q8XG45</accession>
<name>TALB_SALTY</name>
<comment type="function">
    <text evidence="2">Transaldolase is important for the balance of metabolites in the pentose-phosphate pathway.</text>
</comment>
<comment type="catalytic activity">
    <reaction evidence="2">
        <text>D-sedoheptulose 7-phosphate + D-glyceraldehyde 3-phosphate = D-erythrose 4-phosphate + beta-D-fructose 6-phosphate</text>
        <dbReference type="Rhea" id="RHEA:17053"/>
        <dbReference type="ChEBI" id="CHEBI:16897"/>
        <dbReference type="ChEBI" id="CHEBI:57483"/>
        <dbReference type="ChEBI" id="CHEBI:57634"/>
        <dbReference type="ChEBI" id="CHEBI:59776"/>
        <dbReference type="EC" id="2.2.1.2"/>
    </reaction>
</comment>
<comment type="pathway">
    <text evidence="2">Carbohydrate degradation; pentose phosphate pathway; D-glyceraldehyde 3-phosphate and beta-D-fructose 6-phosphate from D-ribose 5-phosphate and D-xylulose 5-phosphate (non-oxidative stage): step 2/3.</text>
</comment>
<comment type="subunit">
    <text evidence="1">Homodimer.</text>
</comment>
<comment type="subcellular location">
    <subcellularLocation>
        <location evidence="2">Cytoplasm</location>
    </subcellularLocation>
</comment>
<comment type="similarity">
    <text evidence="2">Belongs to the transaldolase family. Type 1 subfamily.</text>
</comment>
<reference key="1">
    <citation type="journal article" date="2001" name="Nature">
        <title>Complete genome sequence of Salmonella enterica serovar Typhimurium LT2.</title>
        <authorList>
            <person name="McClelland M."/>
            <person name="Sanderson K.E."/>
            <person name="Spieth J."/>
            <person name="Clifton S.W."/>
            <person name="Latreille P."/>
            <person name="Courtney L."/>
            <person name="Porwollik S."/>
            <person name="Ali J."/>
            <person name="Dante M."/>
            <person name="Du F."/>
            <person name="Hou S."/>
            <person name="Layman D."/>
            <person name="Leonard S."/>
            <person name="Nguyen C."/>
            <person name="Scott K."/>
            <person name="Holmes A."/>
            <person name="Grewal N."/>
            <person name="Mulvaney E."/>
            <person name="Ryan E."/>
            <person name="Sun H."/>
            <person name="Florea L."/>
            <person name="Miller W."/>
            <person name="Stoneking T."/>
            <person name="Nhan M."/>
            <person name="Waterston R."/>
            <person name="Wilson R.K."/>
        </authorList>
    </citation>
    <scope>NUCLEOTIDE SEQUENCE [LARGE SCALE GENOMIC DNA]</scope>
    <source>
        <strain>LT2 / SGSC1412 / ATCC 700720</strain>
    </source>
</reference>
<organism>
    <name type="scientific">Salmonella typhimurium (strain LT2 / SGSC1412 / ATCC 700720)</name>
    <dbReference type="NCBI Taxonomy" id="99287"/>
    <lineage>
        <taxon>Bacteria</taxon>
        <taxon>Pseudomonadati</taxon>
        <taxon>Pseudomonadota</taxon>
        <taxon>Gammaproteobacteria</taxon>
        <taxon>Enterobacterales</taxon>
        <taxon>Enterobacteriaceae</taxon>
        <taxon>Salmonella</taxon>
    </lineage>
</organism>